<gene>
    <name type="primary">RPL30B</name>
    <name type="ordered locus">At1g77940</name>
    <name type="ORF">F28K19.15</name>
</gene>
<keyword id="KW-1185">Reference proteome</keyword>
<keyword id="KW-0687">Ribonucleoprotein</keyword>
<keyword id="KW-0689">Ribosomal protein</keyword>
<reference key="1">
    <citation type="journal article" date="2000" name="Nature">
        <title>Sequence and analysis of chromosome 1 of the plant Arabidopsis thaliana.</title>
        <authorList>
            <person name="Theologis A."/>
            <person name="Ecker J.R."/>
            <person name="Palm C.J."/>
            <person name="Federspiel N.A."/>
            <person name="Kaul S."/>
            <person name="White O."/>
            <person name="Alonso J."/>
            <person name="Altafi H."/>
            <person name="Araujo R."/>
            <person name="Bowman C.L."/>
            <person name="Brooks S.Y."/>
            <person name="Buehler E."/>
            <person name="Chan A."/>
            <person name="Chao Q."/>
            <person name="Chen H."/>
            <person name="Cheuk R.F."/>
            <person name="Chin C.W."/>
            <person name="Chung M.K."/>
            <person name="Conn L."/>
            <person name="Conway A.B."/>
            <person name="Conway A.R."/>
            <person name="Creasy T.H."/>
            <person name="Dewar K."/>
            <person name="Dunn P."/>
            <person name="Etgu P."/>
            <person name="Feldblyum T.V."/>
            <person name="Feng J.-D."/>
            <person name="Fong B."/>
            <person name="Fujii C.Y."/>
            <person name="Gill J.E."/>
            <person name="Goldsmith A.D."/>
            <person name="Haas B."/>
            <person name="Hansen N.F."/>
            <person name="Hughes B."/>
            <person name="Huizar L."/>
            <person name="Hunter J.L."/>
            <person name="Jenkins J."/>
            <person name="Johnson-Hopson C."/>
            <person name="Khan S."/>
            <person name="Khaykin E."/>
            <person name="Kim C.J."/>
            <person name="Koo H.L."/>
            <person name="Kremenetskaia I."/>
            <person name="Kurtz D.B."/>
            <person name="Kwan A."/>
            <person name="Lam B."/>
            <person name="Langin-Hooper S."/>
            <person name="Lee A."/>
            <person name="Lee J.M."/>
            <person name="Lenz C.A."/>
            <person name="Li J.H."/>
            <person name="Li Y.-P."/>
            <person name="Lin X."/>
            <person name="Liu S.X."/>
            <person name="Liu Z.A."/>
            <person name="Luros J.S."/>
            <person name="Maiti R."/>
            <person name="Marziali A."/>
            <person name="Militscher J."/>
            <person name="Miranda M."/>
            <person name="Nguyen M."/>
            <person name="Nierman W.C."/>
            <person name="Osborne B.I."/>
            <person name="Pai G."/>
            <person name="Peterson J."/>
            <person name="Pham P.K."/>
            <person name="Rizzo M."/>
            <person name="Rooney T."/>
            <person name="Rowley D."/>
            <person name="Sakano H."/>
            <person name="Salzberg S.L."/>
            <person name="Schwartz J.R."/>
            <person name="Shinn P."/>
            <person name="Southwick A.M."/>
            <person name="Sun H."/>
            <person name="Tallon L.J."/>
            <person name="Tambunga G."/>
            <person name="Toriumi M.J."/>
            <person name="Town C.D."/>
            <person name="Utterback T."/>
            <person name="Van Aken S."/>
            <person name="Vaysberg M."/>
            <person name="Vysotskaia V.S."/>
            <person name="Walker M."/>
            <person name="Wu D."/>
            <person name="Yu G."/>
            <person name="Fraser C.M."/>
            <person name="Venter J.C."/>
            <person name="Davis R.W."/>
        </authorList>
    </citation>
    <scope>NUCLEOTIDE SEQUENCE [LARGE SCALE GENOMIC DNA]</scope>
    <source>
        <strain>cv. Columbia</strain>
    </source>
</reference>
<reference key="2">
    <citation type="journal article" date="2017" name="Plant J.">
        <title>Araport11: a complete reannotation of the Arabidopsis thaliana reference genome.</title>
        <authorList>
            <person name="Cheng C.Y."/>
            <person name="Krishnakumar V."/>
            <person name="Chan A.P."/>
            <person name="Thibaud-Nissen F."/>
            <person name="Schobel S."/>
            <person name="Town C.D."/>
        </authorList>
    </citation>
    <scope>GENOME REANNOTATION</scope>
    <source>
        <strain>cv. Columbia</strain>
    </source>
</reference>
<reference key="3">
    <citation type="journal article" date="2003" name="Science">
        <title>Empirical analysis of transcriptional activity in the Arabidopsis genome.</title>
        <authorList>
            <person name="Yamada K."/>
            <person name="Lim J."/>
            <person name="Dale J.M."/>
            <person name="Chen H."/>
            <person name="Shinn P."/>
            <person name="Palm C.J."/>
            <person name="Southwick A.M."/>
            <person name="Wu H.C."/>
            <person name="Kim C.J."/>
            <person name="Nguyen M."/>
            <person name="Pham P.K."/>
            <person name="Cheuk R.F."/>
            <person name="Karlin-Newmann G."/>
            <person name="Liu S.X."/>
            <person name="Lam B."/>
            <person name="Sakano H."/>
            <person name="Wu T."/>
            <person name="Yu G."/>
            <person name="Miranda M."/>
            <person name="Quach H.L."/>
            <person name="Tripp M."/>
            <person name="Chang C.H."/>
            <person name="Lee J.M."/>
            <person name="Toriumi M.J."/>
            <person name="Chan M.M."/>
            <person name="Tang C.C."/>
            <person name="Onodera C.S."/>
            <person name="Deng J.M."/>
            <person name="Akiyama K."/>
            <person name="Ansari Y."/>
            <person name="Arakawa T."/>
            <person name="Banh J."/>
            <person name="Banno F."/>
            <person name="Bowser L."/>
            <person name="Brooks S.Y."/>
            <person name="Carninci P."/>
            <person name="Chao Q."/>
            <person name="Choy N."/>
            <person name="Enju A."/>
            <person name="Goldsmith A.D."/>
            <person name="Gurjal M."/>
            <person name="Hansen N.F."/>
            <person name="Hayashizaki Y."/>
            <person name="Johnson-Hopson C."/>
            <person name="Hsuan V.W."/>
            <person name="Iida K."/>
            <person name="Karnes M."/>
            <person name="Khan S."/>
            <person name="Koesema E."/>
            <person name="Ishida J."/>
            <person name="Jiang P.X."/>
            <person name="Jones T."/>
            <person name="Kawai J."/>
            <person name="Kamiya A."/>
            <person name="Meyers C."/>
            <person name="Nakajima M."/>
            <person name="Narusaka M."/>
            <person name="Seki M."/>
            <person name="Sakurai T."/>
            <person name="Satou M."/>
            <person name="Tamse R."/>
            <person name="Vaysberg M."/>
            <person name="Wallender E.K."/>
            <person name="Wong C."/>
            <person name="Yamamura Y."/>
            <person name="Yuan S."/>
            <person name="Shinozaki K."/>
            <person name="Davis R.W."/>
            <person name="Theologis A."/>
            <person name="Ecker J.R."/>
        </authorList>
    </citation>
    <scope>NUCLEOTIDE SEQUENCE [LARGE SCALE MRNA]</scope>
    <source>
        <strain>cv. Columbia</strain>
    </source>
</reference>
<reference key="4">
    <citation type="submission" date="2002-03" db="EMBL/GenBank/DDBJ databases">
        <title>Full-length cDNA from Arabidopsis thaliana.</title>
        <authorList>
            <person name="Brover V.V."/>
            <person name="Troukhan M.E."/>
            <person name="Alexandrov N.A."/>
            <person name="Lu Y.-P."/>
            <person name="Flavell R.B."/>
            <person name="Feldmann K.A."/>
        </authorList>
    </citation>
    <scope>NUCLEOTIDE SEQUENCE [LARGE SCALE MRNA]</scope>
</reference>
<reference key="5">
    <citation type="journal article" date="2001" name="Plant Physiol.">
        <title>The organization of cytoplasmic ribosomal protein genes in the Arabidopsis genome.</title>
        <authorList>
            <person name="Barakat A."/>
            <person name="Szick-Miranda K."/>
            <person name="Chang I.-F."/>
            <person name="Guyot R."/>
            <person name="Blanc G."/>
            <person name="Cooke R."/>
            <person name="Delseny M."/>
            <person name="Bailey-Serres J."/>
        </authorList>
    </citation>
    <scope>GENE FAMILY ORGANIZATION</scope>
    <scope>NOMENCLATURE</scope>
</reference>
<reference key="6">
    <citation type="journal article" date="2023" name="Plant Cell">
        <title>An updated nomenclature for plant ribosomal protein genes.</title>
        <authorList>
            <person name="Scarpin M.R."/>
            <person name="Busche M."/>
            <person name="Martinez R.E."/>
            <person name="Harper L.C."/>
            <person name="Reiser L."/>
            <person name="Szakonyi D."/>
            <person name="Merchante C."/>
            <person name="Lan T."/>
            <person name="Xiong W."/>
            <person name="Mo B."/>
            <person name="Tang G."/>
            <person name="Chen X."/>
            <person name="Bailey-Serres J."/>
            <person name="Browning K.S."/>
            <person name="Brunkard J.O."/>
        </authorList>
    </citation>
    <scope>NOMENCLATURE</scope>
</reference>
<dbReference type="EMBL" id="AC009243">
    <property type="protein sequence ID" value="AAF17698.1"/>
    <property type="status" value="ALT_SEQ"/>
    <property type="molecule type" value="Genomic_DNA"/>
</dbReference>
<dbReference type="EMBL" id="CP002684">
    <property type="protein sequence ID" value="AEE36049.1"/>
    <property type="molecule type" value="Genomic_DNA"/>
</dbReference>
<dbReference type="EMBL" id="AY065370">
    <property type="protein sequence ID" value="AAL38811.1"/>
    <property type="molecule type" value="mRNA"/>
</dbReference>
<dbReference type="EMBL" id="AY114036">
    <property type="protein sequence ID" value="AAM45084.1"/>
    <property type="molecule type" value="mRNA"/>
</dbReference>
<dbReference type="EMBL" id="BT004749">
    <property type="protein sequence ID" value="AAO44015.1"/>
    <property type="molecule type" value="mRNA"/>
</dbReference>
<dbReference type="EMBL" id="AY085881">
    <property type="protein sequence ID" value="AAM63094.1"/>
    <property type="molecule type" value="mRNA"/>
</dbReference>
<dbReference type="RefSeq" id="NP_565164.1">
    <property type="nucleotide sequence ID" value="NM_106443.5"/>
</dbReference>
<dbReference type="SMR" id="Q8VZ19"/>
<dbReference type="BioGRID" id="29348">
    <property type="interactions" value="78"/>
</dbReference>
<dbReference type="FunCoup" id="Q8VZ19">
    <property type="interactions" value="3457"/>
</dbReference>
<dbReference type="STRING" id="3702.Q8VZ19"/>
<dbReference type="PaxDb" id="3702-AT1G77940.1"/>
<dbReference type="ProteomicsDB" id="226026"/>
<dbReference type="EnsemblPlants" id="AT1G77940.1">
    <property type="protein sequence ID" value="AT1G77940.1"/>
    <property type="gene ID" value="AT1G77940"/>
</dbReference>
<dbReference type="GeneID" id="844129"/>
<dbReference type="Gramene" id="AT1G77940.1">
    <property type="protein sequence ID" value="AT1G77940.1"/>
    <property type="gene ID" value="AT1G77940"/>
</dbReference>
<dbReference type="KEGG" id="ath:AT1G77940"/>
<dbReference type="Araport" id="AT1G77940"/>
<dbReference type="TAIR" id="AT1G77940"/>
<dbReference type="eggNOG" id="KOG2988">
    <property type="taxonomic scope" value="Eukaryota"/>
</dbReference>
<dbReference type="HOGENOM" id="CLU_130502_0_1_1"/>
<dbReference type="InParanoid" id="Q8VZ19"/>
<dbReference type="OMA" id="LWRVHIG"/>
<dbReference type="OrthoDB" id="10252883at2759"/>
<dbReference type="PhylomeDB" id="Q8VZ19"/>
<dbReference type="CD-CODE" id="4299E36E">
    <property type="entry name" value="Nucleolus"/>
</dbReference>
<dbReference type="PRO" id="PR:Q8VZ19"/>
<dbReference type="Proteomes" id="UP000006548">
    <property type="component" value="Chromosome 1"/>
</dbReference>
<dbReference type="ExpressionAtlas" id="Q8VZ19">
    <property type="expression patterns" value="baseline and differential"/>
</dbReference>
<dbReference type="GO" id="GO:0022625">
    <property type="term" value="C:cytosolic large ribosomal subunit"/>
    <property type="evidence" value="ECO:0007005"/>
    <property type="project" value="TAIR"/>
</dbReference>
<dbReference type="GO" id="GO:0022626">
    <property type="term" value="C:cytosolic ribosome"/>
    <property type="evidence" value="ECO:0007005"/>
    <property type="project" value="TAIR"/>
</dbReference>
<dbReference type="GO" id="GO:0005739">
    <property type="term" value="C:mitochondrion"/>
    <property type="evidence" value="ECO:0007005"/>
    <property type="project" value="TAIR"/>
</dbReference>
<dbReference type="GO" id="GO:0003729">
    <property type="term" value="F:mRNA binding"/>
    <property type="evidence" value="ECO:0000314"/>
    <property type="project" value="TAIR"/>
</dbReference>
<dbReference type="GO" id="GO:0003735">
    <property type="term" value="F:structural constituent of ribosome"/>
    <property type="evidence" value="ECO:0000314"/>
    <property type="project" value="CAFA"/>
</dbReference>
<dbReference type="FunFam" id="3.30.1330.30:FF:000001">
    <property type="entry name" value="60S ribosomal protein L30"/>
    <property type="match status" value="1"/>
</dbReference>
<dbReference type="Gene3D" id="3.30.1330.30">
    <property type="match status" value="1"/>
</dbReference>
<dbReference type="InterPro" id="IPR039109">
    <property type="entry name" value="Ribosomal_eL30-like"/>
</dbReference>
<dbReference type="InterPro" id="IPR029064">
    <property type="entry name" value="Ribosomal_eL30-like_sf"/>
</dbReference>
<dbReference type="InterPro" id="IPR022991">
    <property type="entry name" value="Ribosomal_eL30_CS"/>
</dbReference>
<dbReference type="InterPro" id="IPR004038">
    <property type="entry name" value="Ribosomal_eL8/eL30/eS12/Gad45"/>
</dbReference>
<dbReference type="NCBIfam" id="NF002172">
    <property type="entry name" value="PRK01018.1"/>
    <property type="match status" value="1"/>
</dbReference>
<dbReference type="PANTHER" id="PTHR11449">
    <property type="entry name" value="RIBOSOMAL PROTEIN L30"/>
    <property type="match status" value="1"/>
</dbReference>
<dbReference type="Pfam" id="PF01248">
    <property type="entry name" value="Ribosomal_L7Ae"/>
    <property type="match status" value="1"/>
</dbReference>
<dbReference type="SUPFAM" id="SSF55315">
    <property type="entry name" value="L30e-like"/>
    <property type="match status" value="1"/>
</dbReference>
<dbReference type="PROSITE" id="PS00709">
    <property type="entry name" value="RIBOSOMAL_L30E_1"/>
    <property type="match status" value="1"/>
</dbReference>
<dbReference type="PROSITE" id="PS00993">
    <property type="entry name" value="RIBOSOMAL_L30E_2"/>
    <property type="match status" value="1"/>
</dbReference>
<feature type="chain" id="PRO_0000244748" description="Large ribosomal subunit protein eL30y">
    <location>
        <begin position="1"/>
        <end position="112"/>
    </location>
</feature>
<proteinExistence type="inferred from homology"/>
<sequence length="112" mass="12290">MVTEKKTKKSHEGINSRLALVMKSGKYTLGYKSVLKSLRGSKGKLILISTNCPPLRRSEIEYYAMLAKVGVHHYNGNNVDLGTACGKYFRVSCLSIVDPGDSDIIKSIPGDQ</sequence>
<accession>Q8VZ19</accession>
<accession>Q9SH07</accession>
<protein>
    <recommendedName>
        <fullName evidence="1">Large ribosomal subunit protein eL30y</fullName>
    </recommendedName>
    <alternativeName>
        <fullName>60S ribosomal protein L30-2</fullName>
    </alternativeName>
</protein>
<name>RL302_ARATH</name>
<comment type="similarity">
    <text evidence="2">Belongs to the eukaryotic ribosomal protein eL30 family.</text>
</comment>
<comment type="sequence caution" evidence="2">
    <conflict type="erroneous gene model prediction">
        <sequence resource="EMBL-CDS" id="AAF17698"/>
    </conflict>
</comment>
<organism>
    <name type="scientific">Arabidopsis thaliana</name>
    <name type="common">Mouse-ear cress</name>
    <dbReference type="NCBI Taxonomy" id="3702"/>
    <lineage>
        <taxon>Eukaryota</taxon>
        <taxon>Viridiplantae</taxon>
        <taxon>Streptophyta</taxon>
        <taxon>Embryophyta</taxon>
        <taxon>Tracheophyta</taxon>
        <taxon>Spermatophyta</taxon>
        <taxon>Magnoliopsida</taxon>
        <taxon>eudicotyledons</taxon>
        <taxon>Gunneridae</taxon>
        <taxon>Pentapetalae</taxon>
        <taxon>rosids</taxon>
        <taxon>malvids</taxon>
        <taxon>Brassicales</taxon>
        <taxon>Brassicaceae</taxon>
        <taxon>Camelineae</taxon>
        <taxon>Arabidopsis</taxon>
    </lineage>
</organism>
<evidence type="ECO:0000303" key="1">
    <source>
    </source>
</evidence>
<evidence type="ECO:0000305" key="2"/>